<keyword id="KW-1185">Reference proteome</keyword>
<keyword id="KW-0687">Ribonucleoprotein</keyword>
<keyword id="KW-0689">Ribosomal protein</keyword>
<keyword id="KW-0694">RNA-binding</keyword>
<keyword id="KW-0699">rRNA-binding</keyword>
<proteinExistence type="inferred from homology"/>
<gene>
    <name evidence="1" type="primary">rplX</name>
    <name type="ordered locus">SRU_1046</name>
</gene>
<reference key="1">
    <citation type="journal article" date="2005" name="Proc. Natl. Acad. Sci. U.S.A.">
        <title>The genome of Salinibacter ruber: convergence and gene exchange among hyperhalophilic bacteria and archaea.</title>
        <authorList>
            <person name="Mongodin E.F."/>
            <person name="Nelson K.E."/>
            <person name="Daugherty S."/>
            <person name="DeBoy R.T."/>
            <person name="Wister J."/>
            <person name="Khouri H."/>
            <person name="Weidman J."/>
            <person name="Walsh D.A."/>
            <person name="Papke R.T."/>
            <person name="Sanchez Perez G."/>
            <person name="Sharma A.K."/>
            <person name="Nesbo C.L."/>
            <person name="MacLeod D."/>
            <person name="Bapteste E."/>
            <person name="Doolittle W.F."/>
            <person name="Charlebois R.L."/>
            <person name="Legault B."/>
            <person name="Rodriguez-Valera F."/>
        </authorList>
    </citation>
    <scope>NUCLEOTIDE SEQUENCE [LARGE SCALE GENOMIC DNA]</scope>
    <source>
        <strain>DSM 13855 / CECT 5946 / M31</strain>
    </source>
</reference>
<evidence type="ECO:0000255" key="1">
    <source>
        <dbReference type="HAMAP-Rule" id="MF_01326"/>
    </source>
</evidence>
<evidence type="ECO:0000256" key="2">
    <source>
        <dbReference type="SAM" id="MobiDB-lite"/>
    </source>
</evidence>
<evidence type="ECO:0000305" key="3"/>
<protein>
    <recommendedName>
        <fullName evidence="1">Large ribosomal subunit protein uL24</fullName>
    </recommendedName>
    <alternativeName>
        <fullName evidence="3">50S ribosomal protein L24</fullName>
    </alternativeName>
</protein>
<comment type="function">
    <text evidence="1">One of two assembly initiator proteins, it binds directly to the 5'-end of the 23S rRNA, where it nucleates assembly of the 50S subunit.</text>
</comment>
<comment type="function">
    <text evidence="1">One of the proteins that surrounds the polypeptide exit tunnel on the outside of the subunit.</text>
</comment>
<comment type="subunit">
    <text evidence="1">Part of the 50S ribosomal subunit.</text>
</comment>
<comment type="similarity">
    <text evidence="1">Belongs to the universal ribosomal protein uL24 family.</text>
</comment>
<sequence>MVMLNKTITSAKSAGEDREAGYVGKVLKVFPDEQRVIVEGVNVRVFHEKPSRSNREGGRTEREAPIHVSNVNPIDSNGESTRIGRKKVEDPDTGRSRWVRYAKTTGEELDD</sequence>
<name>RL24_SALRD</name>
<organism>
    <name type="scientific">Salinibacter ruber (strain DSM 13855 / M31)</name>
    <dbReference type="NCBI Taxonomy" id="309807"/>
    <lineage>
        <taxon>Bacteria</taxon>
        <taxon>Pseudomonadati</taxon>
        <taxon>Rhodothermota</taxon>
        <taxon>Rhodothermia</taxon>
        <taxon>Rhodothermales</taxon>
        <taxon>Salinibacteraceae</taxon>
        <taxon>Salinibacter</taxon>
    </lineage>
</organism>
<feature type="chain" id="PRO_0000355716" description="Large ribosomal subunit protein uL24">
    <location>
        <begin position="1"/>
        <end position="111"/>
    </location>
</feature>
<feature type="region of interest" description="Disordered" evidence="2">
    <location>
        <begin position="48"/>
        <end position="111"/>
    </location>
</feature>
<feature type="compositionally biased region" description="Basic and acidic residues" evidence="2">
    <location>
        <begin position="48"/>
        <end position="65"/>
    </location>
</feature>
<feature type="compositionally biased region" description="Polar residues" evidence="2">
    <location>
        <begin position="69"/>
        <end position="80"/>
    </location>
</feature>
<feature type="compositionally biased region" description="Basic and acidic residues" evidence="2">
    <location>
        <begin position="86"/>
        <end position="95"/>
    </location>
</feature>
<accession>Q2S3Q3</accession>
<dbReference type="EMBL" id="CP000159">
    <property type="protein sequence ID" value="ABC45641.1"/>
    <property type="molecule type" value="Genomic_DNA"/>
</dbReference>
<dbReference type="RefSeq" id="YP_445178.1">
    <property type="nucleotide sequence ID" value="NC_007677.1"/>
</dbReference>
<dbReference type="SMR" id="Q2S3Q3"/>
<dbReference type="STRING" id="309807.SRU_1046"/>
<dbReference type="EnsemblBacteria" id="ABC45641">
    <property type="protein sequence ID" value="ABC45641"/>
    <property type="gene ID" value="SRU_1046"/>
</dbReference>
<dbReference type="KEGG" id="sru:SRU_1046"/>
<dbReference type="PATRIC" id="fig|309807.25.peg.1084"/>
<dbReference type="eggNOG" id="COG0198">
    <property type="taxonomic scope" value="Bacteria"/>
</dbReference>
<dbReference type="HOGENOM" id="CLU_093315_2_0_10"/>
<dbReference type="OrthoDB" id="9807419at2"/>
<dbReference type="Proteomes" id="UP000008674">
    <property type="component" value="Chromosome"/>
</dbReference>
<dbReference type="GO" id="GO:1990904">
    <property type="term" value="C:ribonucleoprotein complex"/>
    <property type="evidence" value="ECO:0007669"/>
    <property type="project" value="UniProtKB-KW"/>
</dbReference>
<dbReference type="GO" id="GO:0005840">
    <property type="term" value="C:ribosome"/>
    <property type="evidence" value="ECO:0007669"/>
    <property type="project" value="UniProtKB-KW"/>
</dbReference>
<dbReference type="GO" id="GO:0019843">
    <property type="term" value="F:rRNA binding"/>
    <property type="evidence" value="ECO:0007669"/>
    <property type="project" value="UniProtKB-UniRule"/>
</dbReference>
<dbReference type="GO" id="GO:0003735">
    <property type="term" value="F:structural constituent of ribosome"/>
    <property type="evidence" value="ECO:0007669"/>
    <property type="project" value="InterPro"/>
</dbReference>
<dbReference type="GO" id="GO:0006412">
    <property type="term" value="P:translation"/>
    <property type="evidence" value="ECO:0007669"/>
    <property type="project" value="UniProtKB-UniRule"/>
</dbReference>
<dbReference type="CDD" id="cd06089">
    <property type="entry name" value="KOW_RPL26"/>
    <property type="match status" value="1"/>
</dbReference>
<dbReference type="Gene3D" id="2.30.30.30">
    <property type="match status" value="1"/>
</dbReference>
<dbReference type="HAMAP" id="MF_01326_B">
    <property type="entry name" value="Ribosomal_uL24_B"/>
    <property type="match status" value="1"/>
</dbReference>
<dbReference type="InterPro" id="IPR014722">
    <property type="entry name" value="Rib_uL2_dom2"/>
</dbReference>
<dbReference type="InterPro" id="IPR003256">
    <property type="entry name" value="Ribosomal_uL24"/>
</dbReference>
<dbReference type="InterPro" id="IPR041988">
    <property type="entry name" value="Ribosomal_uL24_KOW"/>
</dbReference>
<dbReference type="InterPro" id="IPR008991">
    <property type="entry name" value="Translation_prot_SH3-like_sf"/>
</dbReference>
<dbReference type="NCBIfam" id="TIGR01079">
    <property type="entry name" value="rplX_bact"/>
    <property type="match status" value="1"/>
</dbReference>
<dbReference type="PANTHER" id="PTHR12903">
    <property type="entry name" value="MITOCHONDRIAL RIBOSOMAL PROTEIN L24"/>
    <property type="match status" value="1"/>
</dbReference>
<dbReference type="Pfam" id="PF17136">
    <property type="entry name" value="ribosomal_L24"/>
    <property type="match status" value="1"/>
</dbReference>
<dbReference type="SUPFAM" id="SSF50104">
    <property type="entry name" value="Translation proteins SH3-like domain"/>
    <property type="match status" value="1"/>
</dbReference>